<protein>
    <recommendedName>
        <fullName evidence="1">Peptidase T</fullName>
        <ecNumber evidence="1">3.4.11.4</ecNumber>
    </recommendedName>
    <alternativeName>
        <fullName evidence="1">Aminotripeptidase</fullName>
        <shortName evidence="1">Tripeptidase</shortName>
    </alternativeName>
    <alternativeName>
        <fullName evidence="1">Tripeptide aminopeptidase</fullName>
    </alternativeName>
</protein>
<evidence type="ECO:0000255" key="1">
    <source>
        <dbReference type="HAMAP-Rule" id="MF_00550"/>
    </source>
</evidence>
<dbReference type="EC" id="3.4.11.4" evidence="1"/>
<dbReference type="EMBL" id="CP001638">
    <property type="protein sequence ID" value="ACS24389.1"/>
    <property type="molecule type" value="Genomic_DNA"/>
</dbReference>
<dbReference type="SMR" id="C5DAS5"/>
<dbReference type="STRING" id="471223.GWCH70_1595"/>
<dbReference type="MEROPS" id="M20.003"/>
<dbReference type="KEGG" id="gwc:GWCH70_1595"/>
<dbReference type="eggNOG" id="COG2195">
    <property type="taxonomic scope" value="Bacteria"/>
</dbReference>
<dbReference type="HOGENOM" id="CLU_053676_0_0_9"/>
<dbReference type="OrthoDB" id="9804934at2"/>
<dbReference type="GO" id="GO:0005829">
    <property type="term" value="C:cytosol"/>
    <property type="evidence" value="ECO:0007669"/>
    <property type="project" value="TreeGrafter"/>
</dbReference>
<dbReference type="GO" id="GO:0008237">
    <property type="term" value="F:metallopeptidase activity"/>
    <property type="evidence" value="ECO:0007669"/>
    <property type="project" value="UniProtKB-KW"/>
</dbReference>
<dbReference type="GO" id="GO:0045148">
    <property type="term" value="F:tripeptide aminopeptidase activity"/>
    <property type="evidence" value="ECO:0007669"/>
    <property type="project" value="UniProtKB-UniRule"/>
</dbReference>
<dbReference type="GO" id="GO:0008270">
    <property type="term" value="F:zinc ion binding"/>
    <property type="evidence" value="ECO:0007669"/>
    <property type="project" value="UniProtKB-UniRule"/>
</dbReference>
<dbReference type="GO" id="GO:0043171">
    <property type="term" value="P:peptide catabolic process"/>
    <property type="evidence" value="ECO:0007669"/>
    <property type="project" value="UniProtKB-UniRule"/>
</dbReference>
<dbReference type="GO" id="GO:0006508">
    <property type="term" value="P:proteolysis"/>
    <property type="evidence" value="ECO:0007669"/>
    <property type="project" value="UniProtKB-UniRule"/>
</dbReference>
<dbReference type="CDD" id="cd03892">
    <property type="entry name" value="M20_peptT"/>
    <property type="match status" value="1"/>
</dbReference>
<dbReference type="FunFam" id="3.30.70.360:FF:000002">
    <property type="entry name" value="Peptidase T"/>
    <property type="match status" value="1"/>
</dbReference>
<dbReference type="Gene3D" id="3.30.70.360">
    <property type="match status" value="1"/>
</dbReference>
<dbReference type="Gene3D" id="3.40.630.10">
    <property type="entry name" value="Zn peptidases"/>
    <property type="match status" value="1"/>
</dbReference>
<dbReference type="HAMAP" id="MF_00550">
    <property type="entry name" value="Aminopeptidase_M20"/>
    <property type="match status" value="1"/>
</dbReference>
<dbReference type="InterPro" id="IPR001261">
    <property type="entry name" value="ArgE/DapE_CS"/>
</dbReference>
<dbReference type="InterPro" id="IPR036264">
    <property type="entry name" value="Bact_exopeptidase_dim_dom"/>
</dbReference>
<dbReference type="InterPro" id="IPR002933">
    <property type="entry name" value="Peptidase_M20"/>
</dbReference>
<dbReference type="InterPro" id="IPR011650">
    <property type="entry name" value="Peptidase_M20_dimer"/>
</dbReference>
<dbReference type="InterPro" id="IPR010161">
    <property type="entry name" value="Peptidase_M20B"/>
</dbReference>
<dbReference type="NCBIfam" id="TIGR01882">
    <property type="entry name" value="peptidase-T"/>
    <property type="match status" value="1"/>
</dbReference>
<dbReference type="NCBIfam" id="NF003976">
    <property type="entry name" value="PRK05469.1"/>
    <property type="match status" value="1"/>
</dbReference>
<dbReference type="NCBIfam" id="NF009920">
    <property type="entry name" value="PRK13381.1"/>
    <property type="match status" value="1"/>
</dbReference>
<dbReference type="PANTHER" id="PTHR42994">
    <property type="entry name" value="PEPTIDASE T"/>
    <property type="match status" value="1"/>
</dbReference>
<dbReference type="PANTHER" id="PTHR42994:SF1">
    <property type="entry name" value="PEPTIDASE T"/>
    <property type="match status" value="1"/>
</dbReference>
<dbReference type="Pfam" id="PF07687">
    <property type="entry name" value="M20_dimer"/>
    <property type="match status" value="1"/>
</dbReference>
<dbReference type="Pfam" id="PF01546">
    <property type="entry name" value="Peptidase_M20"/>
    <property type="match status" value="1"/>
</dbReference>
<dbReference type="PIRSF" id="PIRSF037215">
    <property type="entry name" value="Peptidase_M20B"/>
    <property type="match status" value="1"/>
</dbReference>
<dbReference type="SUPFAM" id="SSF55031">
    <property type="entry name" value="Bacterial exopeptidase dimerisation domain"/>
    <property type="match status" value="1"/>
</dbReference>
<dbReference type="SUPFAM" id="SSF53187">
    <property type="entry name" value="Zn-dependent exopeptidases"/>
    <property type="match status" value="1"/>
</dbReference>
<dbReference type="PROSITE" id="PS00758">
    <property type="entry name" value="ARGE_DAPE_CPG2_1"/>
    <property type="match status" value="1"/>
</dbReference>
<dbReference type="PROSITE" id="PS00759">
    <property type="entry name" value="ARGE_DAPE_CPG2_2"/>
    <property type="match status" value="1"/>
</dbReference>
<proteinExistence type="inferred from homology"/>
<gene>
    <name evidence="1" type="primary">pepT</name>
    <name type="ordered locus">GWCH70_1595</name>
</gene>
<sequence length="410" mass="45962">MKNEIIERFTKYVQVDTQSDPNSDTCPSTPGQWTLAKMLVEELKAIGMEEVTIDENGYIMATLPANTDKDVPTIGFLAHMDTAPEFTGANVKPQIVENYDGNDIILNEALHIVLSPKDFPELANYKGHTLITTDGTTLLGADNKAGIAEIMTAMAYLIQHPEIKHGKVRVAFTPDEEIGRGPHKFDVAKFGAKYAYTVDGGPLGELEYESFNAAEAKIKFKGKNVHPGTAKGKMINSMKIAMEFHAQLPANEAPEHTEGYEGFYHLLSFQGNVEETALHYIIRDFDREQFEARKAKMREIAAKLQEKYGKERIAIEIKDQYYNMREKIEPVREVVDIAYEAMKNLNIEPKISPIRGGTDGSQLSYMGLPTPNIFTGGENFHGRYEYISVDNMIKATNVIIEIIKLFEQKA</sequence>
<organism>
    <name type="scientific">Geobacillus sp. (strain WCH70)</name>
    <dbReference type="NCBI Taxonomy" id="471223"/>
    <lineage>
        <taxon>Bacteria</taxon>
        <taxon>Bacillati</taxon>
        <taxon>Bacillota</taxon>
        <taxon>Bacilli</taxon>
        <taxon>Bacillales</taxon>
        <taxon>Anoxybacillaceae</taxon>
        <taxon>Geobacillus</taxon>
    </lineage>
</organism>
<feature type="chain" id="PRO_1000211993" description="Peptidase T">
    <location>
        <begin position="1"/>
        <end position="410"/>
    </location>
</feature>
<feature type="active site" evidence="1">
    <location>
        <position position="81"/>
    </location>
</feature>
<feature type="active site" description="Proton acceptor" evidence="1">
    <location>
        <position position="176"/>
    </location>
</feature>
<feature type="binding site" evidence="1">
    <location>
        <position position="79"/>
    </location>
    <ligand>
        <name>Zn(2+)</name>
        <dbReference type="ChEBI" id="CHEBI:29105"/>
        <label>1</label>
    </ligand>
</feature>
<feature type="binding site" evidence="1">
    <location>
        <position position="142"/>
    </location>
    <ligand>
        <name>Zn(2+)</name>
        <dbReference type="ChEBI" id="CHEBI:29105"/>
        <label>1</label>
    </ligand>
</feature>
<feature type="binding site" evidence="1">
    <location>
        <position position="142"/>
    </location>
    <ligand>
        <name>Zn(2+)</name>
        <dbReference type="ChEBI" id="CHEBI:29105"/>
        <label>2</label>
    </ligand>
</feature>
<feature type="binding site" evidence="1">
    <location>
        <position position="177"/>
    </location>
    <ligand>
        <name>Zn(2+)</name>
        <dbReference type="ChEBI" id="CHEBI:29105"/>
        <label>2</label>
    </ligand>
</feature>
<feature type="binding site" evidence="1">
    <location>
        <position position="199"/>
    </location>
    <ligand>
        <name>Zn(2+)</name>
        <dbReference type="ChEBI" id="CHEBI:29105"/>
        <label>1</label>
    </ligand>
</feature>
<feature type="binding site" evidence="1">
    <location>
        <position position="381"/>
    </location>
    <ligand>
        <name>Zn(2+)</name>
        <dbReference type="ChEBI" id="CHEBI:29105"/>
        <label>2</label>
    </ligand>
</feature>
<keyword id="KW-0031">Aminopeptidase</keyword>
<keyword id="KW-0963">Cytoplasm</keyword>
<keyword id="KW-0378">Hydrolase</keyword>
<keyword id="KW-0479">Metal-binding</keyword>
<keyword id="KW-0482">Metalloprotease</keyword>
<keyword id="KW-0645">Protease</keyword>
<keyword id="KW-0862">Zinc</keyword>
<name>PEPT_GEOSW</name>
<accession>C5DAS5</accession>
<comment type="function">
    <text evidence="1">Cleaves the N-terminal amino acid of tripeptides.</text>
</comment>
<comment type="catalytic activity">
    <reaction evidence="1">
        <text>Release of the N-terminal residue from a tripeptide.</text>
        <dbReference type="EC" id="3.4.11.4"/>
    </reaction>
</comment>
<comment type="cofactor">
    <cofactor evidence="1">
        <name>Zn(2+)</name>
        <dbReference type="ChEBI" id="CHEBI:29105"/>
    </cofactor>
    <text evidence="1">Binds 2 Zn(2+) ions per subunit.</text>
</comment>
<comment type="subcellular location">
    <subcellularLocation>
        <location evidence="1">Cytoplasm</location>
    </subcellularLocation>
</comment>
<comment type="similarity">
    <text evidence="1">Belongs to the peptidase M20B family.</text>
</comment>
<reference key="1">
    <citation type="submission" date="2009-06" db="EMBL/GenBank/DDBJ databases">
        <title>Complete sequence of chromosome of Geopacillus sp. WCH70.</title>
        <authorList>
            <consortium name="US DOE Joint Genome Institute"/>
            <person name="Lucas S."/>
            <person name="Copeland A."/>
            <person name="Lapidus A."/>
            <person name="Glavina del Rio T."/>
            <person name="Dalin E."/>
            <person name="Tice H."/>
            <person name="Bruce D."/>
            <person name="Goodwin L."/>
            <person name="Pitluck S."/>
            <person name="Chertkov O."/>
            <person name="Brettin T."/>
            <person name="Detter J.C."/>
            <person name="Han C."/>
            <person name="Larimer F."/>
            <person name="Land M."/>
            <person name="Hauser L."/>
            <person name="Kyrpides N."/>
            <person name="Mikhailova N."/>
            <person name="Brumm P."/>
            <person name="Mead D.A."/>
            <person name="Richardson P."/>
        </authorList>
    </citation>
    <scope>NUCLEOTIDE SEQUENCE [LARGE SCALE GENOMIC DNA]</scope>
    <source>
        <strain>WCH70</strain>
    </source>
</reference>